<keyword id="KW-0045">Antibiotic biosynthesis</keyword>
<keyword id="KW-0963">Cytoplasm</keyword>
<keyword id="KW-0456">Lyase</keyword>
<sequence>MIILDNSIQTKSKAYSISKLITINTLGPEGTSSEYAAKNFITNFTLLQGVNSKLSLHDTFESCIEKTLQSPLEYTIVPHAYDGIKHFYMRPDLQLLQIFRCDTPMYGLAVRPGFEYTDDMLDKAVIVSHPSPINLIKYFTRKDVTFDLVNSTSAAAKRVKDGLSDIALTNELARQKYGLHFVKTFKSIPMSWSLFGKGEIHDEN</sequence>
<evidence type="ECO:0000250" key="1">
    <source>
        <dbReference type="UniProtKB" id="P39638"/>
    </source>
</evidence>
<evidence type="ECO:0000305" key="2"/>
<feature type="chain" id="PRO_0000064795" description="Prephenate decarboxylase">
    <location>
        <begin position="1"/>
        <end position="204"/>
    </location>
</feature>
<accession>Q8KWT6</accession>
<gene>
    <name evidence="1" type="primary">bacA</name>
</gene>
<dbReference type="EC" id="4.1.1.100" evidence="1"/>
<dbReference type="EMBL" id="AF396778">
    <property type="protein sequence ID" value="AAM90568.1"/>
    <property type="molecule type" value="Genomic_DNA"/>
</dbReference>
<dbReference type="SMR" id="Q8KWT6"/>
<dbReference type="STRING" id="483913.AN935_19115"/>
<dbReference type="UniPathway" id="UPA00100"/>
<dbReference type="GO" id="GO:0005737">
    <property type="term" value="C:cytoplasm"/>
    <property type="evidence" value="ECO:0007669"/>
    <property type="project" value="UniProtKB-SubCell"/>
</dbReference>
<dbReference type="GO" id="GO:0016831">
    <property type="term" value="F:carboxy-lyase activity"/>
    <property type="evidence" value="ECO:0000250"/>
    <property type="project" value="UniProtKB"/>
</dbReference>
<dbReference type="GO" id="GO:0017000">
    <property type="term" value="P:antibiotic biosynthetic process"/>
    <property type="evidence" value="ECO:0000250"/>
    <property type="project" value="UniProtKB"/>
</dbReference>
<dbReference type="SUPFAM" id="SSF53850">
    <property type="entry name" value="Periplasmic binding protein-like II"/>
    <property type="match status" value="1"/>
</dbReference>
<proteinExistence type="inferred from homology"/>
<protein>
    <recommendedName>
        <fullName evidence="1">Prephenate decarboxylase</fullName>
        <ecNumber evidence="1">4.1.1.100</ecNumber>
    </recommendedName>
    <alternativeName>
        <fullName evidence="1">Bacilysin biosynthesis protein BacA</fullName>
    </alternativeName>
    <alternativeName>
        <fullName evidence="1">Non-aromatizing prephenate decarboxylase</fullName>
    </alternativeName>
</protein>
<comment type="function">
    <text evidence="1">Part of the bacABCDEF operon responsible for the biosynthesis of the nonribosomally synthesized dipeptide antibiotic bacilysin, composed of L-alanine and L-anticapsin. Bacilysin is an irreversible inactivator of the glutaminase domain of glucosamine synthetase. BacA is an unusual prephenate decarboxylase that avoids the typical aromatization of the cyclohexadienol ring of prephenate. BacA catalyzes the protonation of prephenate (1-carboxy-4-hydroxy-alpha-oxo-2,5-cyclohexadiene-1-propanoic acid) at C6 position, followed by a decarboxylation to produce the endocyclic-delta(4),delta(8)-7R-dihydro-hydroxyphenylpyruvate (en-H2HPP). En-H2HPP is able to undergo a slow nonenzymatic isomerization to produce the exocyclic-delta(3),delta(5)-dihydro-hydroxyphenylpyruvate (ex-H2HPP). BacA isomerizes only the pro-R double bond in prephenate.</text>
</comment>
<comment type="catalytic activity">
    <reaction evidence="1">
        <text>prephenate + H(+) = 3-[(4R)-4-hydroxycyclohexa-1,5-dien-1-yl]-2-oxopropanoate + CO2</text>
        <dbReference type="Rhea" id="RHEA:33499"/>
        <dbReference type="ChEBI" id="CHEBI:15378"/>
        <dbReference type="ChEBI" id="CHEBI:16526"/>
        <dbReference type="ChEBI" id="CHEBI:29934"/>
        <dbReference type="ChEBI" id="CHEBI:84354"/>
        <dbReference type="EC" id="4.1.1.100"/>
    </reaction>
</comment>
<comment type="pathway">
    <text evidence="1">Antibiotic biosynthesis; bacilysin biosynthesis.</text>
</comment>
<comment type="subcellular location">
    <subcellularLocation>
        <location evidence="2">Cytoplasm</location>
    </subcellularLocation>
</comment>
<comment type="similarity">
    <text evidence="2">Belongs to the prephenate decarboxylase family.</text>
</comment>
<reference key="1">
    <citation type="journal article" date="2005" name="Arch. Microbiol.">
        <title>bac genes for recombinant bacilysin and anticapsin production in Bacillus host strains.</title>
        <authorList>
            <person name="Steinborn G."/>
            <person name="Hajirezaei M.-R."/>
            <person name="Hofemeister J."/>
        </authorList>
    </citation>
    <scope>NUCLEOTIDE SEQUENCE [GENOMIC DNA]</scope>
    <source>
        <strain>A1/3</strain>
    </source>
</reference>
<organism>
    <name type="scientific">Bacillus subtilis</name>
    <dbReference type="NCBI Taxonomy" id="1423"/>
    <lineage>
        <taxon>Bacteria</taxon>
        <taxon>Bacillati</taxon>
        <taxon>Bacillota</taxon>
        <taxon>Bacilli</taxon>
        <taxon>Bacillales</taxon>
        <taxon>Bacillaceae</taxon>
        <taxon>Bacillus</taxon>
    </lineage>
</organism>
<name>BACA_BACIU</name>